<name>UCN2_RAT</name>
<feature type="signal peptide" evidence="2">
    <location>
        <begin position="1"/>
        <end position="22"/>
    </location>
</feature>
<feature type="propeptide" id="PRO_0000006243" evidence="1">
    <location>
        <begin position="23"/>
        <end position="67"/>
    </location>
</feature>
<feature type="chain" id="PRO_0000006244" description="Urocortin-2">
    <location>
        <begin position="69"/>
        <end position="106"/>
    </location>
</feature>
<feature type="region of interest" description="Disordered" evidence="3">
    <location>
        <begin position="24"/>
        <end position="60"/>
    </location>
</feature>
<feature type="compositionally biased region" description="Low complexity" evidence="3">
    <location>
        <begin position="33"/>
        <end position="50"/>
    </location>
</feature>
<feature type="compositionally biased region" description="Polar residues" evidence="3">
    <location>
        <begin position="51"/>
        <end position="60"/>
    </location>
</feature>
<feature type="modified residue" description="Valine amide; partial" evidence="1">
    <location>
        <position position="106"/>
    </location>
</feature>
<proteinExistence type="inferred from homology"/>
<evidence type="ECO:0000250" key="1"/>
<evidence type="ECO:0000255" key="2"/>
<evidence type="ECO:0000256" key="3">
    <source>
        <dbReference type="SAM" id="MobiDB-lite"/>
    </source>
</evidence>
<evidence type="ECO:0000305" key="4"/>
<reference key="1">
    <citation type="submission" date="2001-07" db="EMBL/GenBank/DDBJ databases">
        <title>Cloning and analysis of tissue-specific mRNA expression of rat urocortin II.</title>
        <authorList>
            <person name="Park J.H."/>
            <person name="Ju S.K."/>
            <person name="Lee M.K."/>
        </authorList>
    </citation>
    <scope>NUCLEOTIDE SEQUENCE [MRNA]</scope>
    <source>
        <strain>Sprague-Dawley</strain>
        <tissue>Midbrain</tissue>
    </source>
</reference>
<keyword id="KW-0027">Amidation</keyword>
<keyword id="KW-0325">Glycoprotein</keyword>
<keyword id="KW-0372">Hormone</keyword>
<keyword id="KW-1185">Reference proteome</keyword>
<keyword id="KW-0964">Secreted</keyword>
<keyword id="KW-0732">Signal</keyword>
<gene>
    <name type="primary">Ucn2</name>
</gene>
<sequence>MTRWALVVFMVLMLDRVPGTPIPTFQLLPQNYPETTPSSVSSESPSDTTTGPSASWSNSKASPYLDTRVILSLDVPIGLLRILLEQARNKAARNQAATNAQILARVGRR</sequence>
<comment type="function">
    <text evidence="1">Suppresses food intake, delays gastric emptying and decreases heat-induced edema. Might represent an endogenous ligand for maintaining homeostasis after stress (By similarity).</text>
</comment>
<comment type="subunit">
    <text evidence="1">Binds with high affinity to CRF receptors 2-alpha and 2-beta.</text>
</comment>
<comment type="subcellular location">
    <subcellularLocation>
        <location>Secreted</location>
    </subcellularLocation>
</comment>
<comment type="PTM">
    <text evidence="1">Glycosylated.</text>
</comment>
<comment type="similarity">
    <text evidence="4">Belongs to the sauvagine/corticotropin-releasing factor/urotensin I family.</text>
</comment>
<protein>
    <recommendedName>
        <fullName>Urocortin-2</fullName>
    </recommendedName>
    <alternativeName>
        <fullName>Urocortin II</fullName>
        <shortName>Ucn II</shortName>
    </alternativeName>
</protein>
<organism>
    <name type="scientific">Rattus norvegicus</name>
    <name type="common">Rat</name>
    <dbReference type="NCBI Taxonomy" id="10116"/>
    <lineage>
        <taxon>Eukaryota</taxon>
        <taxon>Metazoa</taxon>
        <taxon>Chordata</taxon>
        <taxon>Craniata</taxon>
        <taxon>Vertebrata</taxon>
        <taxon>Euteleostomi</taxon>
        <taxon>Mammalia</taxon>
        <taxon>Eutheria</taxon>
        <taxon>Euarchontoglires</taxon>
        <taxon>Glires</taxon>
        <taxon>Rodentia</taxon>
        <taxon>Myomorpha</taxon>
        <taxon>Muroidea</taxon>
        <taxon>Muridae</taxon>
        <taxon>Murinae</taxon>
        <taxon>Rattus</taxon>
    </lineage>
</organism>
<dbReference type="EMBL" id="AY044835">
    <property type="protein sequence ID" value="AAK98780.1"/>
    <property type="molecule type" value="mRNA"/>
</dbReference>
<dbReference type="SMR" id="Q91WW1"/>
<dbReference type="FunCoup" id="Q91WW1">
    <property type="interactions" value="1"/>
</dbReference>
<dbReference type="STRING" id="10116.ENSRNOP00000028031"/>
<dbReference type="PaxDb" id="10116-ENSRNOP00000028031"/>
<dbReference type="UCSC" id="RGD:620765">
    <property type="organism name" value="rat"/>
</dbReference>
<dbReference type="AGR" id="RGD:620765"/>
<dbReference type="RGD" id="620765">
    <property type="gene designation" value="Ucn2"/>
</dbReference>
<dbReference type="eggNOG" id="ENOG502R23K">
    <property type="taxonomic scope" value="Eukaryota"/>
</dbReference>
<dbReference type="HOGENOM" id="CLU_2145078_0_0_1"/>
<dbReference type="InParanoid" id="Q91WW1"/>
<dbReference type="OMA" id="TWPWAAQ"/>
<dbReference type="TreeFam" id="TF330723"/>
<dbReference type="Reactome" id="R-RNO-373080">
    <property type="pathway name" value="Class B/2 (Secretin family receptors)"/>
</dbReference>
<dbReference type="PRO" id="PR:Q91WW1"/>
<dbReference type="Proteomes" id="UP000002494">
    <property type="component" value="Unplaced"/>
</dbReference>
<dbReference type="GO" id="GO:0005615">
    <property type="term" value="C:extracellular space"/>
    <property type="evidence" value="ECO:0000314"/>
    <property type="project" value="RGD"/>
</dbReference>
<dbReference type="GO" id="GO:0051431">
    <property type="term" value="F:corticotropin-releasing hormone receptor 2 binding"/>
    <property type="evidence" value="ECO:0000353"/>
    <property type="project" value="RGD"/>
</dbReference>
<dbReference type="GO" id="GO:0051429">
    <property type="term" value="F:corticotropin-releasing hormone receptor binding"/>
    <property type="evidence" value="ECO:0000250"/>
    <property type="project" value="UniProtKB"/>
</dbReference>
<dbReference type="GO" id="GO:0001664">
    <property type="term" value="F:G protein-coupled receptor binding"/>
    <property type="evidence" value="ECO:0000266"/>
    <property type="project" value="RGD"/>
</dbReference>
<dbReference type="GO" id="GO:0005179">
    <property type="term" value="F:hormone activity"/>
    <property type="evidence" value="ECO:0007669"/>
    <property type="project" value="UniProtKB-KW"/>
</dbReference>
<dbReference type="GO" id="GO:0042562">
    <property type="term" value="F:hormone binding"/>
    <property type="evidence" value="ECO:0000266"/>
    <property type="project" value="RGD"/>
</dbReference>
<dbReference type="GO" id="GO:0007189">
    <property type="term" value="P:adenylate cyclase-activating G protein-coupled receptor signaling pathway"/>
    <property type="evidence" value="ECO:0000266"/>
    <property type="project" value="RGD"/>
</dbReference>
<dbReference type="GO" id="GO:0071385">
    <property type="term" value="P:cellular response to glucocorticoid stimulus"/>
    <property type="evidence" value="ECO:0000270"/>
    <property type="project" value="RGD"/>
</dbReference>
<dbReference type="GO" id="GO:0071456">
    <property type="term" value="P:cellular response to hypoxia"/>
    <property type="evidence" value="ECO:0000270"/>
    <property type="project" value="RGD"/>
</dbReference>
<dbReference type="GO" id="GO:0031669">
    <property type="term" value="P:cellular response to nutrient levels"/>
    <property type="evidence" value="ECO:0000318"/>
    <property type="project" value="GO_Central"/>
</dbReference>
<dbReference type="GO" id="GO:0007586">
    <property type="term" value="P:digestion"/>
    <property type="evidence" value="ECO:0007669"/>
    <property type="project" value="InterPro"/>
</dbReference>
<dbReference type="GO" id="GO:0009755">
    <property type="term" value="P:hormone-mediated signaling pathway"/>
    <property type="evidence" value="ECO:0000266"/>
    <property type="project" value="RGD"/>
</dbReference>
<dbReference type="GO" id="GO:0046882">
    <property type="term" value="P:negative regulation of follicle-stimulating hormone secretion"/>
    <property type="evidence" value="ECO:0000315"/>
    <property type="project" value="RGD"/>
</dbReference>
<dbReference type="GO" id="GO:0010629">
    <property type="term" value="P:negative regulation of gene expression"/>
    <property type="evidence" value="ECO:0000315"/>
    <property type="project" value="RGD"/>
</dbReference>
<dbReference type="GO" id="GO:0033685">
    <property type="term" value="P:negative regulation of luteinizing hormone secretion"/>
    <property type="evidence" value="ECO:0000315"/>
    <property type="project" value="RGD"/>
</dbReference>
<dbReference type="GO" id="GO:0035902">
    <property type="term" value="P:response to immobilization stress"/>
    <property type="evidence" value="ECO:0000270"/>
    <property type="project" value="RGD"/>
</dbReference>
<dbReference type="GO" id="GO:0042246">
    <property type="term" value="P:tissue regeneration"/>
    <property type="evidence" value="ECO:0000304"/>
    <property type="project" value="RGD"/>
</dbReference>
<dbReference type="InterPro" id="IPR000187">
    <property type="entry name" value="CRF"/>
</dbReference>
<dbReference type="InterPro" id="IPR024270">
    <property type="entry name" value="Urocortin_II/III"/>
</dbReference>
<dbReference type="PANTHER" id="PTHR17575:SF0">
    <property type="entry name" value="UROCORTIN-2"/>
    <property type="match status" value="1"/>
</dbReference>
<dbReference type="PANTHER" id="PTHR17575">
    <property type="entry name" value="UROCORTIN-2 AND 3"/>
    <property type="match status" value="1"/>
</dbReference>
<dbReference type="Pfam" id="PF00473">
    <property type="entry name" value="CRF"/>
    <property type="match status" value="1"/>
</dbReference>
<accession>Q91WW1</accession>